<proteinExistence type="evidence at protein level"/>
<reference key="1">
    <citation type="journal article" date="2002" name="Mech. Dev.">
        <title>Nobox is a homeobox-encoding gene preferentially expressed in primordial and growing oocytes.</title>
        <authorList>
            <person name="Suzumori N."/>
            <person name="Yan C."/>
            <person name="Matzuk M.M."/>
            <person name="Rajkovic A."/>
        </authorList>
    </citation>
    <scope>NUCLEOTIDE SEQUENCE [MRNA]</scope>
    <scope>TISSUE SPECIFICITY</scope>
    <source>
        <strain>129/SvEv</strain>
    </source>
</reference>
<reference key="2">
    <citation type="journal article" date="2004" name="Genome Res.">
        <title>The status, quality, and expansion of the NIH full-length cDNA project: the Mammalian Gene Collection (MGC).</title>
        <authorList>
            <consortium name="The MGC Project Team"/>
        </authorList>
    </citation>
    <scope>NUCLEOTIDE SEQUENCE [LARGE SCALE MRNA]</scope>
    <source>
        <tissue>Brain</tissue>
    </source>
</reference>
<reference key="3">
    <citation type="journal article" date="1996" name="Proc. Natl. Acad. Sci. U.S.A.">
        <title>Cloning and characterization of four murine homeobox genes.</title>
        <authorList>
            <person name="Rovescalli A.C."/>
            <person name="Asoh S."/>
            <person name="Nirenberg M.W."/>
        </authorList>
    </citation>
    <scope>NUCLEOTIDE SEQUENCE [GENOMIC DNA] OF 128-326</scope>
    <scope>DEVELOPMENTAL STAGE</scope>
</reference>
<reference key="4">
    <citation type="journal article" date="2004" name="Science">
        <title>NOBOX deficiency disrupts early folliculogenesis and oocyte-specific gene expression.</title>
        <authorList>
            <person name="Rajkovic A."/>
            <person name="Pangas S.A."/>
            <person name="Ballow D."/>
            <person name="Suzumori N."/>
            <person name="Matzuk M.M."/>
        </authorList>
    </citation>
    <scope>FUNCTION</scope>
    <scope>DISRUPTION PHENOTYPE</scope>
</reference>
<reference key="5">
    <citation type="journal article" date="2006" name="J. Biol. Chem.">
        <title>Characterization of NOBOX DNA binding specificity and its regulation of Gdf9 and Pou5f1 promoters.</title>
        <authorList>
            <person name="Choi Y."/>
            <person name="Rajkovic A."/>
        </authorList>
    </citation>
    <scope>FUNCTION</scope>
    <scope>DNA-BINDING</scope>
    <scope>MUTAGENESIS OF ASN-186</scope>
</reference>
<reference key="6">
    <citation type="journal article" date="2007" name="Am. J. Hum. Genet.">
        <title>NOBOX homeobox mutation causes premature ovarian failure.</title>
        <authorList>
            <person name="Qin Y."/>
            <person name="Choi Y."/>
            <person name="Zhao H."/>
            <person name="Simpson J.L."/>
            <person name="Chen Z.-J."/>
            <person name="Rajkovic A."/>
        </authorList>
    </citation>
    <scope>MUTAGENESIS OF ARG-187 AND ARG-192</scope>
</reference>
<evidence type="ECO:0000255" key="1">
    <source>
        <dbReference type="PROSITE-ProRule" id="PRU00108"/>
    </source>
</evidence>
<evidence type="ECO:0000256" key="2">
    <source>
        <dbReference type="SAM" id="MobiDB-lite"/>
    </source>
</evidence>
<evidence type="ECO:0000269" key="3">
    <source>
    </source>
</evidence>
<evidence type="ECO:0000269" key="4">
    <source>
    </source>
</evidence>
<evidence type="ECO:0000269" key="5">
    <source>
    </source>
</evidence>
<evidence type="ECO:0000269" key="6">
    <source>
    </source>
</evidence>
<evidence type="ECO:0000269" key="7">
    <source>
    </source>
</evidence>
<evidence type="ECO:0000305" key="8"/>
<accession>Q8VIH1</accession>
<accession>P70367</accession>
<sequence length="527" mass="57565">MEPTEKLCKKMQGQEAGDKPRTAALETEGPLQDSALPIQDDQDKQSSLPRASLGKRPLSKTSEELMDAGTCRVHKAPTAAACGPQSEEEGCSPPERKAESLKPSISAVPGQATAGSLNSHEGDLKKESLEVTCQFRKKTRTLYRSDQLEELERIFQEDHYPDSDKRHEISQMVGVTPQRIMVWFQNRRAKWRKVEKLNEKETKNGPAAPSADSSQHRSAPELLDPMPTDLEPGPVPPENILDVFPEPPMLLTSEQTLTPFQNNEGAERVAVTPPLLSPPPIRRANLPLPLGPVQTPQVLPPMRDVPGSDSIYKDKAYVSWGTSIASPPTYSNLEDLGSQDYQASSQLGSFQLSQAPHLPLFPSLQSQFPYLPPFPYPIPSSMPFLPPEDSLFSFPFGFSGDSSQDYCPGPPPGQILLQPPAENMGTGPWSGHCLPEPPFPRPHYPQALGQPLGAEGYFPNLLPTPYALTMSKQSSLGLNGLLEGTRVETGSSLSKMSDEQTSSSLEQPALEEVRDKNKNSHAAGAKE</sequence>
<feature type="chain" id="PRO_0000268866" description="Homeobox protein NOBOX">
    <location>
        <begin position="1"/>
        <end position="527"/>
    </location>
</feature>
<feature type="DNA-binding region" description="Homeobox" evidence="1">
    <location>
        <begin position="136"/>
        <end position="195"/>
    </location>
</feature>
<feature type="region of interest" description="Disordered" evidence="2">
    <location>
        <begin position="1"/>
        <end position="126"/>
    </location>
</feature>
<feature type="region of interest" description="Disordered" evidence="2">
    <location>
        <begin position="194"/>
        <end position="245"/>
    </location>
</feature>
<feature type="region of interest" description="Disordered" evidence="2">
    <location>
        <begin position="271"/>
        <end position="306"/>
    </location>
</feature>
<feature type="region of interest" description="Disordered" evidence="2">
    <location>
        <begin position="488"/>
        <end position="527"/>
    </location>
</feature>
<feature type="compositionally biased region" description="Basic and acidic residues" evidence="2">
    <location>
        <begin position="194"/>
        <end position="203"/>
    </location>
</feature>
<feature type="compositionally biased region" description="Polar residues" evidence="2">
    <location>
        <begin position="488"/>
        <end position="506"/>
    </location>
</feature>
<feature type="compositionally biased region" description="Basic and acidic residues" evidence="2">
    <location>
        <begin position="511"/>
        <end position="527"/>
    </location>
</feature>
<feature type="mutagenesis site" description="Abolishes DNA-binding." evidence="5">
    <original>N</original>
    <variation>Q</variation>
    <location>
        <position position="186"/>
    </location>
</feature>
<feature type="mutagenesis site" description="Abolishes DNA-binding." evidence="6">
    <original>R</original>
    <variation>H</variation>
    <location>
        <position position="187"/>
    </location>
</feature>
<feature type="mutagenesis site" description="No effect on DNA-binding." evidence="6">
    <original>R</original>
    <variation>Q</variation>
    <location>
        <position position="192"/>
    </location>
</feature>
<feature type="sequence conflict" description="In Ref. 3; AAC52828." evidence="8" ref="3">
    <original>SIAS</original>
    <variation>RYGT</variation>
    <location>
        <begin position="323"/>
        <end position="326"/>
    </location>
</feature>
<gene>
    <name type="primary">Nobox</name>
    <name type="synonym">Og2x</name>
</gene>
<keyword id="KW-0217">Developmental protein</keyword>
<keyword id="KW-0221">Differentiation</keyword>
<keyword id="KW-0238">DNA-binding</keyword>
<keyword id="KW-0371">Homeobox</keyword>
<keyword id="KW-0539">Nucleus</keyword>
<keyword id="KW-0896">Oogenesis</keyword>
<keyword id="KW-1185">Reference proteome</keyword>
<keyword id="KW-0804">Transcription</keyword>
<keyword id="KW-0805">Transcription regulation</keyword>
<dbReference type="EMBL" id="AY061761">
    <property type="protein sequence ID" value="AAL29683.1"/>
    <property type="molecule type" value="mRNA"/>
</dbReference>
<dbReference type="EMBL" id="BC125280">
    <property type="protein sequence ID" value="AAI25281.1"/>
    <property type="molecule type" value="mRNA"/>
</dbReference>
<dbReference type="EMBL" id="BC125282">
    <property type="protein sequence ID" value="AAI25283.1"/>
    <property type="molecule type" value="mRNA"/>
</dbReference>
<dbReference type="EMBL" id="U65067">
    <property type="protein sequence ID" value="AAC52828.1"/>
    <property type="molecule type" value="Genomic_DNA"/>
</dbReference>
<dbReference type="CCDS" id="CCDS20093.1"/>
<dbReference type="RefSeq" id="NP_570939.1">
    <property type="nucleotide sequence ID" value="NM_130869.3"/>
</dbReference>
<dbReference type="SMR" id="Q8VIH1"/>
<dbReference type="FunCoup" id="Q8VIH1">
    <property type="interactions" value="108"/>
</dbReference>
<dbReference type="STRING" id="10090.ENSMUSP00000031749"/>
<dbReference type="GlyGen" id="Q8VIH1">
    <property type="glycosylation" value="1 site"/>
</dbReference>
<dbReference type="iPTMnet" id="Q8VIH1"/>
<dbReference type="PhosphoSitePlus" id="Q8VIH1"/>
<dbReference type="PaxDb" id="10090-ENSMUSP00000031749"/>
<dbReference type="Antibodypedia" id="32735">
    <property type="antibodies" value="145 antibodies from 18 providers"/>
</dbReference>
<dbReference type="DNASU" id="18291"/>
<dbReference type="Ensembl" id="ENSMUST00000031749.16">
    <property type="protein sequence ID" value="ENSMUSP00000031749.9"/>
    <property type="gene ID" value="ENSMUSG00000029736.16"/>
</dbReference>
<dbReference type="GeneID" id="18291"/>
<dbReference type="KEGG" id="mmu:18291"/>
<dbReference type="UCSC" id="uc009bsp.1">
    <property type="organism name" value="mouse"/>
</dbReference>
<dbReference type="AGR" id="MGI:108011"/>
<dbReference type="CTD" id="135935"/>
<dbReference type="MGI" id="MGI:108011">
    <property type="gene designation" value="Nobox"/>
</dbReference>
<dbReference type="VEuPathDB" id="HostDB:ENSMUSG00000029736"/>
<dbReference type="eggNOG" id="KOG0490">
    <property type="taxonomic scope" value="Eukaryota"/>
</dbReference>
<dbReference type="GeneTree" id="ENSGT00650000093445"/>
<dbReference type="InParanoid" id="Q8VIH1"/>
<dbReference type="OMA" id="PIPWNDP"/>
<dbReference type="OrthoDB" id="1867783at2759"/>
<dbReference type="PhylomeDB" id="Q8VIH1"/>
<dbReference type="TreeFam" id="TF337576"/>
<dbReference type="BioGRID-ORCS" id="18291">
    <property type="hits" value="0 hits in 76 CRISPR screens"/>
</dbReference>
<dbReference type="PRO" id="PR:Q8VIH1"/>
<dbReference type="Proteomes" id="UP000000589">
    <property type="component" value="Chromosome 6"/>
</dbReference>
<dbReference type="RNAct" id="Q8VIH1">
    <property type="molecule type" value="protein"/>
</dbReference>
<dbReference type="Bgee" id="ENSMUSG00000029736">
    <property type="expression patterns" value="Expressed in primary oocyte and 12 other cell types or tissues"/>
</dbReference>
<dbReference type="ExpressionAtlas" id="Q8VIH1">
    <property type="expression patterns" value="baseline and differential"/>
</dbReference>
<dbReference type="GO" id="GO:0005737">
    <property type="term" value="C:cytoplasm"/>
    <property type="evidence" value="ECO:0000314"/>
    <property type="project" value="MGI"/>
</dbReference>
<dbReference type="GO" id="GO:0005634">
    <property type="term" value="C:nucleus"/>
    <property type="evidence" value="ECO:0007669"/>
    <property type="project" value="UniProtKB-SubCell"/>
</dbReference>
<dbReference type="GO" id="GO:0005667">
    <property type="term" value="C:transcription regulator complex"/>
    <property type="evidence" value="ECO:0000305"/>
    <property type="project" value="MGI"/>
</dbReference>
<dbReference type="GO" id="GO:0001228">
    <property type="term" value="F:DNA-binding transcription activator activity, RNA polymerase II-specific"/>
    <property type="evidence" value="ECO:0000314"/>
    <property type="project" value="NTNU_SB"/>
</dbReference>
<dbReference type="GO" id="GO:0003700">
    <property type="term" value="F:DNA-binding transcription factor activity"/>
    <property type="evidence" value="ECO:0000315"/>
    <property type="project" value="MGI"/>
</dbReference>
<dbReference type="GO" id="GO:0000978">
    <property type="term" value="F:RNA polymerase II cis-regulatory region sequence-specific DNA binding"/>
    <property type="evidence" value="ECO:0000314"/>
    <property type="project" value="NTNU_SB"/>
</dbReference>
<dbReference type="GO" id="GO:0043565">
    <property type="term" value="F:sequence-specific DNA binding"/>
    <property type="evidence" value="ECO:0000314"/>
    <property type="project" value="MGI"/>
</dbReference>
<dbReference type="GO" id="GO:0048477">
    <property type="term" value="P:oogenesis"/>
    <property type="evidence" value="ECO:0007669"/>
    <property type="project" value="UniProtKB-KW"/>
</dbReference>
<dbReference type="GO" id="GO:0001541">
    <property type="term" value="P:ovarian follicle development"/>
    <property type="evidence" value="ECO:0000315"/>
    <property type="project" value="MGI"/>
</dbReference>
<dbReference type="GO" id="GO:0045944">
    <property type="term" value="P:positive regulation of transcription by RNA polymerase II"/>
    <property type="evidence" value="ECO:0000314"/>
    <property type="project" value="NTNU_SB"/>
</dbReference>
<dbReference type="GO" id="GO:0006366">
    <property type="term" value="P:transcription by RNA polymerase II"/>
    <property type="evidence" value="ECO:0000315"/>
    <property type="project" value="MGI"/>
</dbReference>
<dbReference type="CDD" id="cd00086">
    <property type="entry name" value="homeodomain"/>
    <property type="match status" value="1"/>
</dbReference>
<dbReference type="FunFam" id="1.10.10.60:FF:000396">
    <property type="entry name" value="NOBOX oogenesis homeobox"/>
    <property type="match status" value="1"/>
</dbReference>
<dbReference type="Gene3D" id="1.10.10.60">
    <property type="entry name" value="Homeodomain-like"/>
    <property type="match status" value="1"/>
</dbReference>
<dbReference type="InterPro" id="IPR001356">
    <property type="entry name" value="HD"/>
</dbReference>
<dbReference type="InterPro" id="IPR009057">
    <property type="entry name" value="Homeodomain-like_sf"/>
</dbReference>
<dbReference type="InterPro" id="IPR042988">
    <property type="entry name" value="NOBOX"/>
</dbReference>
<dbReference type="PANTHER" id="PTHR47060">
    <property type="entry name" value="HOMEOBOX PROTEIN NOBOX"/>
    <property type="match status" value="1"/>
</dbReference>
<dbReference type="PANTHER" id="PTHR47060:SF1">
    <property type="entry name" value="HOMEOBOX PROTEIN NOBOX"/>
    <property type="match status" value="1"/>
</dbReference>
<dbReference type="Pfam" id="PF00046">
    <property type="entry name" value="Homeodomain"/>
    <property type="match status" value="1"/>
</dbReference>
<dbReference type="SMART" id="SM00389">
    <property type="entry name" value="HOX"/>
    <property type="match status" value="1"/>
</dbReference>
<dbReference type="SUPFAM" id="SSF46689">
    <property type="entry name" value="Homeodomain-like"/>
    <property type="match status" value="1"/>
</dbReference>
<dbReference type="PROSITE" id="PS50071">
    <property type="entry name" value="HOMEOBOX_2"/>
    <property type="match status" value="1"/>
</dbReference>
<protein>
    <recommendedName>
        <fullName>Homeobox protein NOBOX</fullName>
    </recommendedName>
    <alternativeName>
        <fullName>Homeodomain-containing protein OG-2</fullName>
    </alternativeName>
    <alternativeName>
        <fullName>Newborn ovary homeobox protein</fullName>
    </alternativeName>
    <alternativeName>
        <fullName>Oocyte-specific homeobox protein</fullName>
    </alternativeName>
</protein>
<name>NOBOX_MOUSE</name>
<comment type="function">
    <text evidence="4 5">Transcription factor which plays an essential role in postnatal follicle development. Binds preferentially to the DNA sequences 5'-TAATTG-3', 5'-TAGTTG-3' and 5'-TAATTA-3'. Directly regulates the transcription of POU5F1 and GDF9 during early folliculogenesis.</text>
</comment>
<comment type="subcellular location">
    <subcellularLocation>
        <location>Nucleus</location>
    </subcellularLocation>
</comment>
<comment type="tissue specificity">
    <text evidence="3">Specifically expressed in ovaries and testes. In ovaries, expressed in oocytes from primordial through antral follicles but not in granulosa cells, theca cells and corpora lutea.</text>
</comment>
<comment type="developmental stage">
    <text evidence="7">Expressed from 15.5 dpc.</text>
</comment>
<comment type="disruption phenotype">
    <text evidence="4">Male mice are fertile and show no obvious abnormality. Female mice lacking Nobox have normal gross anatomy and histology, but are infertile with atrophic ovaries that lack oocytes at 6 weeks of age.</text>
</comment>
<organism>
    <name type="scientific">Mus musculus</name>
    <name type="common">Mouse</name>
    <dbReference type="NCBI Taxonomy" id="10090"/>
    <lineage>
        <taxon>Eukaryota</taxon>
        <taxon>Metazoa</taxon>
        <taxon>Chordata</taxon>
        <taxon>Craniata</taxon>
        <taxon>Vertebrata</taxon>
        <taxon>Euteleostomi</taxon>
        <taxon>Mammalia</taxon>
        <taxon>Eutheria</taxon>
        <taxon>Euarchontoglires</taxon>
        <taxon>Glires</taxon>
        <taxon>Rodentia</taxon>
        <taxon>Myomorpha</taxon>
        <taxon>Muroidea</taxon>
        <taxon>Muridae</taxon>
        <taxon>Murinae</taxon>
        <taxon>Mus</taxon>
        <taxon>Mus</taxon>
    </lineage>
</organism>